<gene>
    <name type="ordered locus">BLi03984</name>
    <name type="ordered locus">BL03913</name>
</gene>
<evidence type="ECO:0000255" key="1">
    <source>
        <dbReference type="HAMAP-Rule" id="MF_01863"/>
    </source>
</evidence>
<sequence>MANEFRVCDDCQATNLKTLLPRLKEIDPDAKVEIGCQSYCGPGRKKSFAFVNNRPLSAPDEDELIEKVKKKLKK</sequence>
<keyword id="KW-1185">Reference proteome</keyword>
<protein>
    <recommendedName>
        <fullName evidence="1">UPF0741 protein BLi03984/BL03913</fullName>
    </recommendedName>
</protein>
<dbReference type="EMBL" id="CP000002">
    <property type="protein sequence ID" value="AAU25423.1"/>
    <property type="molecule type" value="Genomic_DNA"/>
</dbReference>
<dbReference type="EMBL" id="AE017333">
    <property type="protein sequence ID" value="AAU42798.1"/>
    <property type="molecule type" value="Genomic_DNA"/>
</dbReference>
<dbReference type="RefSeq" id="WP_003186096.1">
    <property type="nucleotide sequence ID" value="NC_006322.1"/>
</dbReference>
<dbReference type="SMR" id="Q65DR6"/>
<dbReference type="STRING" id="279010.BL03913"/>
<dbReference type="KEGG" id="bld:BLi03984"/>
<dbReference type="KEGG" id="bli:BL03913"/>
<dbReference type="eggNOG" id="COG4844">
    <property type="taxonomic scope" value="Bacteria"/>
</dbReference>
<dbReference type="HOGENOM" id="CLU_163820_1_0_9"/>
<dbReference type="Proteomes" id="UP000000606">
    <property type="component" value="Chromosome"/>
</dbReference>
<dbReference type="HAMAP" id="MF_01863">
    <property type="entry name" value="UPF0741"/>
    <property type="match status" value="1"/>
</dbReference>
<dbReference type="InterPro" id="IPR009910">
    <property type="entry name" value="DUF1450"/>
</dbReference>
<dbReference type="InterPro" id="IPR020880">
    <property type="entry name" value="UPF0741"/>
</dbReference>
<dbReference type="Pfam" id="PF07293">
    <property type="entry name" value="DUF1450"/>
    <property type="match status" value="1"/>
</dbReference>
<reference key="1">
    <citation type="journal article" date="2004" name="J. Mol. Microbiol. Biotechnol.">
        <title>The complete genome sequence of Bacillus licheniformis DSM13, an organism with great industrial potential.</title>
        <authorList>
            <person name="Veith B."/>
            <person name="Herzberg C."/>
            <person name="Steckel S."/>
            <person name="Feesche J."/>
            <person name="Maurer K.H."/>
            <person name="Ehrenreich P."/>
            <person name="Baeumer S."/>
            <person name="Henne A."/>
            <person name="Liesegang H."/>
            <person name="Merkl R."/>
            <person name="Ehrenreich A."/>
            <person name="Gottschalk G."/>
        </authorList>
    </citation>
    <scope>NUCLEOTIDE SEQUENCE [LARGE SCALE GENOMIC DNA]</scope>
    <source>
        <strain>ATCC 14580 / DSM 13 / JCM 2505 / CCUG 7422 / NBRC 12200 / NCIMB 9375 / NCTC 10341 / NRRL NRS-1264 / Gibson 46</strain>
    </source>
</reference>
<reference key="2">
    <citation type="journal article" date="2004" name="Genome Biol.">
        <title>Complete genome sequence of the industrial bacterium Bacillus licheniformis and comparisons with closely related Bacillus species.</title>
        <authorList>
            <person name="Rey M.W."/>
            <person name="Ramaiya P."/>
            <person name="Nelson B.A."/>
            <person name="Brody-Karpin S.D."/>
            <person name="Zaretsky E.J."/>
            <person name="Tang M."/>
            <person name="Lopez de Leon A."/>
            <person name="Xiang H."/>
            <person name="Gusti V."/>
            <person name="Clausen I.G."/>
            <person name="Olsen P.B."/>
            <person name="Rasmussen M.D."/>
            <person name="Andersen J.T."/>
            <person name="Joergensen P.L."/>
            <person name="Larsen T.S."/>
            <person name="Sorokin A."/>
            <person name="Bolotin A."/>
            <person name="Lapidus A."/>
            <person name="Galleron N."/>
            <person name="Ehrlich S.D."/>
            <person name="Berka R.M."/>
        </authorList>
    </citation>
    <scope>NUCLEOTIDE SEQUENCE [LARGE SCALE GENOMIC DNA]</scope>
    <source>
        <strain>ATCC 14580 / DSM 13 / JCM 2505 / CCUG 7422 / NBRC 12200 / NCIMB 9375 / NCTC 10341 / NRRL NRS-1264 / Gibson 46</strain>
    </source>
</reference>
<accession>Q65DR6</accession>
<accession>Q62P88</accession>
<organism>
    <name type="scientific">Bacillus licheniformis (strain ATCC 14580 / DSM 13 / JCM 2505 / CCUG 7422 / NBRC 12200 / NCIMB 9375 / NCTC 10341 / NRRL NRS-1264 / Gibson 46)</name>
    <dbReference type="NCBI Taxonomy" id="279010"/>
    <lineage>
        <taxon>Bacteria</taxon>
        <taxon>Bacillati</taxon>
        <taxon>Bacillota</taxon>
        <taxon>Bacilli</taxon>
        <taxon>Bacillales</taxon>
        <taxon>Bacillaceae</taxon>
        <taxon>Bacillus</taxon>
    </lineage>
</organism>
<comment type="similarity">
    <text evidence="1">Belongs to the UPF0741 family.</text>
</comment>
<proteinExistence type="inferred from homology"/>
<feature type="chain" id="PRO_0000372736" description="UPF0741 protein BLi03984/BL03913">
    <location>
        <begin position="1"/>
        <end position="74"/>
    </location>
</feature>
<name>Y3913_BACLD</name>